<feature type="chain" id="PRO_1000203715" description="Arginine repressor">
    <location>
        <begin position="1"/>
        <end position="151"/>
    </location>
</feature>
<accession>C4Z0G8</accession>
<reference key="1">
    <citation type="journal article" date="2009" name="Proc. Natl. Acad. Sci. U.S.A.">
        <title>Characterizing a model human gut microbiota composed of members of its two dominant bacterial phyla.</title>
        <authorList>
            <person name="Mahowald M.A."/>
            <person name="Rey F.E."/>
            <person name="Seedorf H."/>
            <person name="Turnbaugh P.J."/>
            <person name="Fulton R.S."/>
            <person name="Wollam A."/>
            <person name="Shah N."/>
            <person name="Wang C."/>
            <person name="Magrini V."/>
            <person name="Wilson R.K."/>
            <person name="Cantarel B.L."/>
            <person name="Coutinho P.M."/>
            <person name="Henrissat B."/>
            <person name="Crock L.W."/>
            <person name="Russell A."/>
            <person name="Verberkmoes N.C."/>
            <person name="Hettich R.L."/>
            <person name="Gordon J.I."/>
        </authorList>
    </citation>
    <scope>NUCLEOTIDE SEQUENCE [LARGE SCALE GENOMIC DNA]</scope>
    <source>
        <strain>ATCC 27750 / DSM 3376 / VPI C15-48 / C15-B4</strain>
    </source>
</reference>
<keyword id="KW-0028">Amino-acid biosynthesis</keyword>
<keyword id="KW-0055">Arginine biosynthesis</keyword>
<keyword id="KW-0963">Cytoplasm</keyword>
<keyword id="KW-0238">DNA-binding</keyword>
<keyword id="KW-1185">Reference proteome</keyword>
<keyword id="KW-0678">Repressor</keyword>
<keyword id="KW-0804">Transcription</keyword>
<keyword id="KW-0805">Transcription regulation</keyword>
<gene>
    <name evidence="1" type="primary">argR</name>
    <name type="ordered locus">EUBELI_01081</name>
</gene>
<organism>
    <name type="scientific">Lachnospira eligens (strain ATCC 27750 / DSM 3376 / VPI C15-48 / C15-B4)</name>
    <name type="common">Eubacterium eligens</name>
    <dbReference type="NCBI Taxonomy" id="515620"/>
    <lineage>
        <taxon>Bacteria</taxon>
        <taxon>Bacillati</taxon>
        <taxon>Bacillota</taxon>
        <taxon>Clostridia</taxon>
        <taxon>Lachnospirales</taxon>
        <taxon>Lachnospiraceae</taxon>
        <taxon>Lachnospira</taxon>
    </lineage>
</organism>
<proteinExistence type="inferred from homology"/>
<name>ARGR_LACE2</name>
<comment type="function">
    <text evidence="1">Regulates arginine biosynthesis genes.</text>
</comment>
<comment type="pathway">
    <text>Amino-acid biosynthesis; L-arginine biosynthesis [regulation].</text>
</comment>
<comment type="subcellular location">
    <subcellularLocation>
        <location evidence="1">Cytoplasm</location>
    </subcellularLocation>
</comment>
<comment type="similarity">
    <text evidence="1">Belongs to the ArgR family.</text>
</comment>
<sequence length="151" mass="16790">MKTDRHKKILEVIDRYEVGTQEELAKILNDEGYNVTQATVSRDIRELNLSKVSVDGKRTRYATLTKDKPVASDKFLTVLKEGFVSMDMAQNILVIKTAPGMAMAVCAAIDALEWNEIVGSIAGDDTIMCAVRTVNDTLLVMNKIKKLIKNN</sequence>
<dbReference type="EMBL" id="CP001104">
    <property type="protein sequence ID" value="ACR72081.1"/>
    <property type="molecule type" value="Genomic_DNA"/>
</dbReference>
<dbReference type="RefSeq" id="WP_012739316.1">
    <property type="nucleotide sequence ID" value="NC_012778.1"/>
</dbReference>
<dbReference type="SMR" id="C4Z0G8"/>
<dbReference type="STRING" id="515620.EUBELI_01081"/>
<dbReference type="GeneID" id="41355808"/>
<dbReference type="KEGG" id="eel:EUBELI_01081"/>
<dbReference type="eggNOG" id="COG1438">
    <property type="taxonomic scope" value="Bacteria"/>
</dbReference>
<dbReference type="HOGENOM" id="CLU_097103_3_0_9"/>
<dbReference type="UniPathway" id="UPA00068"/>
<dbReference type="Proteomes" id="UP000001476">
    <property type="component" value="Chromosome"/>
</dbReference>
<dbReference type="GO" id="GO:0005737">
    <property type="term" value="C:cytoplasm"/>
    <property type="evidence" value="ECO:0007669"/>
    <property type="project" value="UniProtKB-SubCell"/>
</dbReference>
<dbReference type="GO" id="GO:0034618">
    <property type="term" value="F:arginine binding"/>
    <property type="evidence" value="ECO:0007669"/>
    <property type="project" value="InterPro"/>
</dbReference>
<dbReference type="GO" id="GO:0003677">
    <property type="term" value="F:DNA binding"/>
    <property type="evidence" value="ECO:0007669"/>
    <property type="project" value="UniProtKB-KW"/>
</dbReference>
<dbReference type="GO" id="GO:0003700">
    <property type="term" value="F:DNA-binding transcription factor activity"/>
    <property type="evidence" value="ECO:0007669"/>
    <property type="project" value="UniProtKB-UniRule"/>
</dbReference>
<dbReference type="GO" id="GO:0006526">
    <property type="term" value="P:L-arginine biosynthetic process"/>
    <property type="evidence" value="ECO:0007669"/>
    <property type="project" value="UniProtKB-UniPathway"/>
</dbReference>
<dbReference type="GO" id="GO:0051259">
    <property type="term" value="P:protein complex oligomerization"/>
    <property type="evidence" value="ECO:0007669"/>
    <property type="project" value="InterPro"/>
</dbReference>
<dbReference type="GO" id="GO:1900079">
    <property type="term" value="P:regulation of arginine biosynthetic process"/>
    <property type="evidence" value="ECO:0007669"/>
    <property type="project" value="UniProtKB-UniRule"/>
</dbReference>
<dbReference type="Gene3D" id="3.30.1360.40">
    <property type="match status" value="1"/>
</dbReference>
<dbReference type="Gene3D" id="1.10.10.10">
    <property type="entry name" value="Winged helix-like DNA-binding domain superfamily/Winged helix DNA-binding domain"/>
    <property type="match status" value="1"/>
</dbReference>
<dbReference type="HAMAP" id="MF_00173">
    <property type="entry name" value="Arg_repressor"/>
    <property type="match status" value="1"/>
</dbReference>
<dbReference type="InterPro" id="IPR001669">
    <property type="entry name" value="Arg_repress"/>
</dbReference>
<dbReference type="InterPro" id="IPR020899">
    <property type="entry name" value="Arg_repress_C"/>
</dbReference>
<dbReference type="InterPro" id="IPR036251">
    <property type="entry name" value="Arg_repress_C_sf"/>
</dbReference>
<dbReference type="InterPro" id="IPR020900">
    <property type="entry name" value="Arg_repress_DNA-bd"/>
</dbReference>
<dbReference type="InterPro" id="IPR036388">
    <property type="entry name" value="WH-like_DNA-bd_sf"/>
</dbReference>
<dbReference type="InterPro" id="IPR036390">
    <property type="entry name" value="WH_DNA-bd_sf"/>
</dbReference>
<dbReference type="NCBIfam" id="TIGR01529">
    <property type="entry name" value="argR_whole"/>
    <property type="match status" value="1"/>
</dbReference>
<dbReference type="PANTHER" id="PTHR34471">
    <property type="entry name" value="ARGININE REPRESSOR"/>
    <property type="match status" value="1"/>
</dbReference>
<dbReference type="PANTHER" id="PTHR34471:SF1">
    <property type="entry name" value="ARGININE REPRESSOR"/>
    <property type="match status" value="1"/>
</dbReference>
<dbReference type="Pfam" id="PF01316">
    <property type="entry name" value="Arg_repressor"/>
    <property type="match status" value="1"/>
</dbReference>
<dbReference type="Pfam" id="PF02863">
    <property type="entry name" value="Arg_repressor_C"/>
    <property type="match status" value="1"/>
</dbReference>
<dbReference type="PRINTS" id="PR01467">
    <property type="entry name" value="ARGREPRESSOR"/>
</dbReference>
<dbReference type="SUPFAM" id="SSF55252">
    <property type="entry name" value="C-terminal domain of arginine repressor"/>
    <property type="match status" value="1"/>
</dbReference>
<dbReference type="SUPFAM" id="SSF46785">
    <property type="entry name" value="Winged helix' DNA-binding domain"/>
    <property type="match status" value="1"/>
</dbReference>
<protein>
    <recommendedName>
        <fullName evidence="1">Arginine repressor</fullName>
    </recommendedName>
</protein>
<evidence type="ECO:0000255" key="1">
    <source>
        <dbReference type="HAMAP-Rule" id="MF_00173"/>
    </source>
</evidence>